<gene>
    <name evidence="3" type="primary">trappc6b</name>
</gene>
<sequence>MADEALFQFLHSEIIQYVNSAETGESENGRCVSKLENMGFRVGQGLIERFTKDTPRFKDELDVMKFICKDFWTSVFKKQIDNLRTNHQGIYVLQDNKFRLLTQLSAGKQYLEHAPKFLAFTCGLVRGALSNIGVKSIVTAEVSVMPACKFQVMIQKM</sequence>
<name>TPC6B_DANRE</name>
<feature type="chain" id="PRO_0000445150" description="Trafficking protein particle complex subunit 6b">
    <location>
        <begin position="1"/>
        <end position="157"/>
    </location>
</feature>
<feature type="sequence conflict" description="In Ref. 2; AAH83391." evidence="4" ref="2">
    <original>K</original>
    <variation>Q</variation>
    <location>
        <position position="52"/>
    </location>
</feature>
<keyword id="KW-0256">Endoplasmic reticulum</keyword>
<keyword id="KW-0333">Golgi apparatus</keyword>
<keyword id="KW-0524">Neurogenesis</keyword>
<keyword id="KW-1185">Reference proteome</keyword>
<evidence type="ECO:0000250" key="1">
    <source>
        <dbReference type="UniProtKB" id="Q86SZ2"/>
    </source>
</evidence>
<evidence type="ECO:0000269" key="2">
    <source>
    </source>
</evidence>
<evidence type="ECO:0000303" key="3">
    <source>
    </source>
</evidence>
<evidence type="ECO:0000305" key="4"/>
<proteinExistence type="evidence at transcript level"/>
<organism>
    <name type="scientific">Danio rerio</name>
    <name type="common">Zebrafish</name>
    <name type="synonym">Brachydanio rerio</name>
    <dbReference type="NCBI Taxonomy" id="7955"/>
    <lineage>
        <taxon>Eukaryota</taxon>
        <taxon>Metazoa</taxon>
        <taxon>Chordata</taxon>
        <taxon>Craniata</taxon>
        <taxon>Vertebrata</taxon>
        <taxon>Euteleostomi</taxon>
        <taxon>Actinopterygii</taxon>
        <taxon>Neopterygii</taxon>
        <taxon>Teleostei</taxon>
        <taxon>Ostariophysi</taxon>
        <taxon>Cypriniformes</taxon>
        <taxon>Danionidae</taxon>
        <taxon>Danioninae</taxon>
        <taxon>Danio</taxon>
    </lineage>
</organism>
<accession>F1QMV3</accession>
<accession>Q5XJB3</accession>
<reference key="1">
    <citation type="journal article" date="2013" name="Nature">
        <title>The zebrafish reference genome sequence and its relationship to the human genome.</title>
        <authorList>
            <person name="Howe K."/>
            <person name="Clark M.D."/>
            <person name="Torroja C.F."/>
            <person name="Torrance J."/>
            <person name="Berthelot C."/>
            <person name="Muffato M."/>
            <person name="Collins J.E."/>
            <person name="Humphray S."/>
            <person name="McLaren K."/>
            <person name="Matthews L."/>
            <person name="McLaren S."/>
            <person name="Sealy I."/>
            <person name="Caccamo M."/>
            <person name="Churcher C."/>
            <person name="Scott C."/>
            <person name="Barrett J.C."/>
            <person name="Koch R."/>
            <person name="Rauch G.J."/>
            <person name="White S."/>
            <person name="Chow W."/>
            <person name="Kilian B."/>
            <person name="Quintais L.T."/>
            <person name="Guerra-Assuncao J.A."/>
            <person name="Zhou Y."/>
            <person name="Gu Y."/>
            <person name="Yen J."/>
            <person name="Vogel J.H."/>
            <person name="Eyre T."/>
            <person name="Redmond S."/>
            <person name="Banerjee R."/>
            <person name="Chi J."/>
            <person name="Fu B."/>
            <person name="Langley E."/>
            <person name="Maguire S.F."/>
            <person name="Laird G.K."/>
            <person name="Lloyd D."/>
            <person name="Kenyon E."/>
            <person name="Donaldson S."/>
            <person name="Sehra H."/>
            <person name="Almeida-King J."/>
            <person name="Loveland J."/>
            <person name="Trevanion S."/>
            <person name="Jones M."/>
            <person name="Quail M."/>
            <person name="Willey D."/>
            <person name="Hunt A."/>
            <person name="Burton J."/>
            <person name="Sims S."/>
            <person name="McLay K."/>
            <person name="Plumb B."/>
            <person name="Davis J."/>
            <person name="Clee C."/>
            <person name="Oliver K."/>
            <person name="Clark R."/>
            <person name="Riddle C."/>
            <person name="Elliot D."/>
            <person name="Threadgold G."/>
            <person name="Harden G."/>
            <person name="Ware D."/>
            <person name="Begum S."/>
            <person name="Mortimore B."/>
            <person name="Kerry G."/>
            <person name="Heath P."/>
            <person name="Phillimore B."/>
            <person name="Tracey A."/>
            <person name="Corby N."/>
            <person name="Dunn M."/>
            <person name="Johnson C."/>
            <person name="Wood J."/>
            <person name="Clark S."/>
            <person name="Pelan S."/>
            <person name="Griffiths G."/>
            <person name="Smith M."/>
            <person name="Glithero R."/>
            <person name="Howden P."/>
            <person name="Barker N."/>
            <person name="Lloyd C."/>
            <person name="Stevens C."/>
            <person name="Harley J."/>
            <person name="Holt K."/>
            <person name="Panagiotidis G."/>
            <person name="Lovell J."/>
            <person name="Beasley H."/>
            <person name="Henderson C."/>
            <person name="Gordon D."/>
            <person name="Auger K."/>
            <person name="Wright D."/>
            <person name="Collins J."/>
            <person name="Raisen C."/>
            <person name="Dyer L."/>
            <person name="Leung K."/>
            <person name="Robertson L."/>
            <person name="Ambridge K."/>
            <person name="Leongamornlert D."/>
            <person name="McGuire S."/>
            <person name="Gilderthorp R."/>
            <person name="Griffiths C."/>
            <person name="Manthravadi D."/>
            <person name="Nichol S."/>
            <person name="Barker G."/>
            <person name="Whitehead S."/>
            <person name="Kay M."/>
            <person name="Brown J."/>
            <person name="Murnane C."/>
            <person name="Gray E."/>
            <person name="Humphries M."/>
            <person name="Sycamore N."/>
            <person name="Barker D."/>
            <person name="Saunders D."/>
            <person name="Wallis J."/>
            <person name="Babbage A."/>
            <person name="Hammond S."/>
            <person name="Mashreghi-Mohammadi M."/>
            <person name="Barr L."/>
            <person name="Martin S."/>
            <person name="Wray P."/>
            <person name="Ellington A."/>
            <person name="Matthews N."/>
            <person name="Ellwood M."/>
            <person name="Woodmansey R."/>
            <person name="Clark G."/>
            <person name="Cooper J."/>
            <person name="Tromans A."/>
            <person name="Grafham D."/>
            <person name="Skuce C."/>
            <person name="Pandian R."/>
            <person name="Andrews R."/>
            <person name="Harrison E."/>
            <person name="Kimberley A."/>
            <person name="Garnett J."/>
            <person name="Fosker N."/>
            <person name="Hall R."/>
            <person name="Garner P."/>
            <person name="Kelly D."/>
            <person name="Bird C."/>
            <person name="Palmer S."/>
            <person name="Gehring I."/>
            <person name="Berger A."/>
            <person name="Dooley C.M."/>
            <person name="Ersan-Urun Z."/>
            <person name="Eser C."/>
            <person name="Geiger H."/>
            <person name="Geisler M."/>
            <person name="Karotki L."/>
            <person name="Kirn A."/>
            <person name="Konantz J."/>
            <person name="Konantz M."/>
            <person name="Oberlander M."/>
            <person name="Rudolph-Geiger S."/>
            <person name="Teucke M."/>
            <person name="Lanz C."/>
            <person name="Raddatz G."/>
            <person name="Osoegawa K."/>
            <person name="Zhu B."/>
            <person name="Rapp A."/>
            <person name="Widaa S."/>
            <person name="Langford C."/>
            <person name="Yang F."/>
            <person name="Schuster S.C."/>
            <person name="Carter N.P."/>
            <person name="Harrow J."/>
            <person name="Ning Z."/>
            <person name="Herrero J."/>
            <person name="Searle S.M."/>
            <person name="Enright A."/>
            <person name="Geisler R."/>
            <person name="Plasterk R.H."/>
            <person name="Lee C."/>
            <person name="Westerfield M."/>
            <person name="de Jong P.J."/>
            <person name="Zon L.I."/>
            <person name="Postlethwait J.H."/>
            <person name="Nusslein-Volhard C."/>
            <person name="Hubbard T.J."/>
            <person name="Roest Crollius H."/>
            <person name="Rogers J."/>
            <person name="Stemple D.L."/>
        </authorList>
    </citation>
    <scope>NUCLEOTIDE SEQUENCE [LARGE SCALE GENOMIC DNA]</scope>
    <source>
        <strain>Tuebingen</strain>
    </source>
</reference>
<reference key="2">
    <citation type="submission" date="2004-10" db="EMBL/GenBank/DDBJ databases">
        <authorList>
            <consortium name="NIH - Zebrafish Gene Collection (ZGC) project"/>
        </authorList>
    </citation>
    <scope>NUCLEOTIDE SEQUENCE [LARGE SCALE MRNA]</scope>
    <source>
        <strain>AB</strain>
        <tissue>Heart</tissue>
    </source>
</reference>
<reference key="3">
    <citation type="journal article" date="2018" name="J. Med. Genet.">
        <title>A homozygous founder mutation in TRAPPC6B associates with a neurodevelopmental disorder characterised by microcephaly, epilepsy and autistic features.</title>
        <authorList>
            <person name="Marin-Valencia I."/>
            <person name="Novarino G."/>
            <person name="Johansen A."/>
            <person name="Rosti B."/>
            <person name="Issa M.Y."/>
            <person name="Musaev D."/>
            <person name="Bhat G."/>
            <person name="Scott E."/>
            <person name="Silhavy J.L."/>
            <person name="Stanley V."/>
            <person name="Rosti R.O."/>
            <person name="Gleeson J.W."/>
            <person name="Imam F.B."/>
            <person name="Zaki M.S."/>
            <person name="Gleeson J.G."/>
        </authorList>
    </citation>
    <scope>FUNCTION</scope>
    <scope>DEVELOPMENTAL STAGE</scope>
    <scope>DISRUPTION PHENOTYPE</scope>
</reference>
<protein>
    <recommendedName>
        <fullName evidence="3">Trafficking protein particle complex subunit 6b</fullName>
        <shortName>TRAPP complex subunit 6B</shortName>
    </recommendedName>
</protein>
<dbReference type="EMBL" id="BX927210">
    <property type="status" value="NOT_ANNOTATED_CDS"/>
    <property type="molecule type" value="Genomic_DNA"/>
</dbReference>
<dbReference type="EMBL" id="BC083391">
    <property type="protein sequence ID" value="AAH83391.1"/>
    <property type="molecule type" value="mRNA"/>
</dbReference>
<dbReference type="RefSeq" id="NP_001006029.1">
    <property type="nucleotide sequence ID" value="NM_001006029.1"/>
</dbReference>
<dbReference type="SMR" id="F1QMV3"/>
<dbReference type="FunCoup" id="F1QMV3">
    <property type="interactions" value="885"/>
</dbReference>
<dbReference type="STRING" id="7955.ENSDARP00000006381"/>
<dbReference type="PaxDb" id="7955-ENSDARP00000006381"/>
<dbReference type="Ensembl" id="ENSDART00000012963">
    <property type="protein sequence ID" value="ENSDARP00000006381"/>
    <property type="gene ID" value="ENSDARG00000016463"/>
</dbReference>
<dbReference type="GeneID" id="450008"/>
<dbReference type="KEGG" id="dre:450008"/>
<dbReference type="AGR" id="ZFIN:ZDB-GENE-041010-122"/>
<dbReference type="CTD" id="122553"/>
<dbReference type="ZFIN" id="ZDB-GENE-041010-122">
    <property type="gene designation" value="trappc6b"/>
</dbReference>
<dbReference type="eggNOG" id="KOG3316">
    <property type="taxonomic scope" value="Eukaryota"/>
</dbReference>
<dbReference type="HOGENOM" id="CLU_076409_3_1_1"/>
<dbReference type="InParanoid" id="F1QMV3"/>
<dbReference type="OMA" id="XFTKDTA"/>
<dbReference type="OrthoDB" id="941624at2759"/>
<dbReference type="PhylomeDB" id="F1QMV3"/>
<dbReference type="TreeFam" id="TF313010"/>
<dbReference type="Reactome" id="R-DRE-204005">
    <property type="pathway name" value="COPII-mediated vesicle transport"/>
</dbReference>
<dbReference type="PRO" id="PR:F1QMV3"/>
<dbReference type="Proteomes" id="UP000000437">
    <property type="component" value="Chromosome 23"/>
</dbReference>
<dbReference type="Bgee" id="ENSDARG00000016463">
    <property type="expression patterns" value="Expressed in mature ovarian follicle and 21 other cell types or tissues"/>
</dbReference>
<dbReference type="GO" id="GO:0005801">
    <property type="term" value="C:cis-Golgi network"/>
    <property type="evidence" value="ECO:0000318"/>
    <property type="project" value="GO_Central"/>
</dbReference>
<dbReference type="GO" id="GO:0005783">
    <property type="term" value="C:endoplasmic reticulum"/>
    <property type="evidence" value="ECO:0007669"/>
    <property type="project" value="UniProtKB-SubCell"/>
</dbReference>
<dbReference type="GO" id="GO:0005802">
    <property type="term" value="C:trans-Golgi network"/>
    <property type="evidence" value="ECO:0000318"/>
    <property type="project" value="GO_Central"/>
</dbReference>
<dbReference type="GO" id="GO:0030008">
    <property type="term" value="C:TRAPP complex"/>
    <property type="evidence" value="ECO:0000318"/>
    <property type="project" value="GO_Central"/>
</dbReference>
<dbReference type="GO" id="GO:0006888">
    <property type="term" value="P:endoplasmic reticulum to Golgi vesicle-mediated transport"/>
    <property type="evidence" value="ECO:0000318"/>
    <property type="project" value="GO_Central"/>
</dbReference>
<dbReference type="GO" id="GO:0007399">
    <property type="term" value="P:nervous system development"/>
    <property type="evidence" value="ECO:0007669"/>
    <property type="project" value="UniProtKB-KW"/>
</dbReference>
<dbReference type="CDD" id="cd14944">
    <property type="entry name" value="TRAPPC6A_Trs33"/>
    <property type="match status" value="1"/>
</dbReference>
<dbReference type="FunFam" id="3.30.1380.20:FF:000004">
    <property type="entry name" value="Trafficking protein particle complex subunit 6B"/>
    <property type="match status" value="1"/>
</dbReference>
<dbReference type="Gene3D" id="3.30.1380.20">
    <property type="entry name" value="Trafficking protein particle complex subunit 3"/>
    <property type="match status" value="1"/>
</dbReference>
<dbReference type="InterPro" id="IPR024096">
    <property type="entry name" value="NO_sig/Golgi_transp_ligand-bd"/>
</dbReference>
<dbReference type="InterPro" id="IPR007194">
    <property type="entry name" value="TRAPP_component"/>
</dbReference>
<dbReference type="InterPro" id="IPR037992">
    <property type="entry name" value="TRAPPC6/Trs33"/>
</dbReference>
<dbReference type="PANTHER" id="PTHR12817">
    <property type="entry name" value="TRAFFICKING PROTEIN PARTICLE COMPLEX SUBUNIT 6B"/>
    <property type="match status" value="1"/>
</dbReference>
<dbReference type="PANTHER" id="PTHR12817:SF3">
    <property type="entry name" value="TRAFFICKING PROTEIN PARTICLE COMPLEX SUBUNIT 6B"/>
    <property type="match status" value="1"/>
</dbReference>
<dbReference type="Pfam" id="PF04051">
    <property type="entry name" value="TRAPP"/>
    <property type="match status" value="1"/>
</dbReference>
<dbReference type="SUPFAM" id="SSF111126">
    <property type="entry name" value="Ligand-binding domain in the NO signalling and Golgi transport"/>
    <property type="match status" value="1"/>
</dbReference>
<comment type="function">
    <text evidence="2">Component of a transport protein particle (TRAPP) complex that may function in specific stages of inter-organelle traffic. Specifically involved in the early development of neural circuitry, likely by controlling the frequency and amplitude of intracellular calcium transients implicated in the regulation of neuron differentiation and survival.</text>
</comment>
<comment type="subunit">
    <text evidence="1">Homodimer (By similarity). Part of a TRAPP complex (By similarity).</text>
</comment>
<comment type="subcellular location">
    <subcellularLocation>
        <location evidence="4">Golgi apparatus</location>
        <location evidence="4">cis-Golgi network</location>
    </subcellularLocation>
    <subcellularLocation>
        <location evidence="4">Endoplasmic reticulum</location>
    </subcellularLocation>
</comment>
<comment type="developmental stage">
    <text evidence="2">Expressed in the central nervous system as early as 24 hours post-fertilization.</text>
</comment>
<comment type="disruption phenotype">
    <text evidence="2">Morpholino knockdown of the protein causes neurodevelopmental abnormalities associated with decreased survival rate. Morphants are characterized by microcephaly, brain hyperexcitability and lower seizure threshold.</text>
</comment>
<comment type="similarity">
    <text evidence="4">Belongs to the TRAPP small subunits family. BET3 subfamily.</text>
</comment>